<comment type="function">
    <text evidence="2">Regulates the biosynthesis of dolichol phosphate-mannose. Regulatory subunit of the dolichol-phosphate mannose (DPM) synthase complex; essential for the ER localization and stable expression of DPMS1.</text>
</comment>
<comment type="pathway">
    <text evidence="4">Protein modification; protein glycosylation.</text>
</comment>
<comment type="subunit">
    <text evidence="2">Component of the dolichol-phosphate mannose (DPM) synthase complex composed of DPMS1, DPMS2 and DPMS3; in the complex interacts directly with DPMS3. Associates with the GPI-GlcNAc transferase (GPI-GnT) complex.</text>
</comment>
<comment type="subcellular location">
    <subcellularLocation>
        <location evidence="2">Endoplasmic reticulum membrane</location>
        <topology evidence="1">Multi-pass membrane protein</topology>
    </subcellularLocation>
    <text evidence="2">May serve as regulatory subunit and membrane anchor for DPMS1.</text>
</comment>
<comment type="disruption phenotype">
    <text evidence="2">No visible phenotype under normal growth conditions.</text>
</comment>
<comment type="similarity">
    <text evidence="4">Belongs to the DPM2 family.</text>
</comment>
<sequence length="80" mass="9056">MELADRAVGLLLSSISLSIFTYYTFWVIILPFVDSDHFIHKYFLPQDYAILVPVFAGIALLSLISVFIGMVMLKSKKKKA</sequence>
<dbReference type="EMBL" id="AC011765">
    <property type="protein sequence ID" value="AAG52357.1"/>
    <property type="molecule type" value="Genomic_DNA"/>
</dbReference>
<dbReference type="EMBL" id="CP002684">
    <property type="protein sequence ID" value="AEE35580.1"/>
    <property type="molecule type" value="Genomic_DNA"/>
</dbReference>
<dbReference type="EMBL" id="CP002684">
    <property type="protein sequence ID" value="ANM58503.1"/>
    <property type="molecule type" value="Genomic_DNA"/>
</dbReference>
<dbReference type="EMBL" id="BT004738">
    <property type="protein sequence ID" value="AAO44004.1"/>
    <property type="molecule type" value="mRNA"/>
</dbReference>
<dbReference type="EMBL" id="AK175408">
    <property type="protein sequence ID" value="BAD43171.1"/>
    <property type="molecule type" value="mRNA"/>
</dbReference>
<dbReference type="EMBL" id="AK227980">
    <property type="protein sequence ID" value="BAE99946.1"/>
    <property type="molecule type" value="mRNA"/>
</dbReference>
<dbReference type="PIR" id="A96772">
    <property type="entry name" value="A96772"/>
</dbReference>
<dbReference type="RefSeq" id="NP_001320932.1">
    <property type="nucleotide sequence ID" value="NM_001334642.1"/>
</dbReference>
<dbReference type="RefSeq" id="NP_177574.1">
    <property type="nucleotide sequence ID" value="NM_106094.7"/>
</dbReference>
<dbReference type="SMR" id="Q9CA79"/>
<dbReference type="FunCoup" id="Q9CA79">
    <property type="interactions" value="3083"/>
</dbReference>
<dbReference type="STRING" id="3702.Q9CA79"/>
<dbReference type="PaxDb" id="3702-AT1G74340.1"/>
<dbReference type="EnsemblPlants" id="AT1G74340.1">
    <property type="protein sequence ID" value="AT1G74340.1"/>
    <property type="gene ID" value="AT1G74340"/>
</dbReference>
<dbReference type="EnsemblPlants" id="AT1G74340.2">
    <property type="protein sequence ID" value="AT1G74340.2"/>
    <property type="gene ID" value="AT1G74340"/>
</dbReference>
<dbReference type="GeneID" id="843775"/>
<dbReference type="Gramene" id="AT1G74340.1">
    <property type="protein sequence ID" value="AT1G74340.1"/>
    <property type="gene ID" value="AT1G74340"/>
</dbReference>
<dbReference type="Gramene" id="AT1G74340.2">
    <property type="protein sequence ID" value="AT1G74340.2"/>
    <property type="gene ID" value="AT1G74340"/>
</dbReference>
<dbReference type="KEGG" id="ath:AT1G74340"/>
<dbReference type="Araport" id="AT1G74340"/>
<dbReference type="TAIR" id="AT1G74340">
    <property type="gene designation" value="DPMS2"/>
</dbReference>
<dbReference type="eggNOG" id="KOG3488">
    <property type="taxonomic scope" value="Eukaryota"/>
</dbReference>
<dbReference type="HOGENOM" id="CLU_150144_2_0_1"/>
<dbReference type="InParanoid" id="Q9CA79"/>
<dbReference type="OMA" id="YTLWIIV"/>
<dbReference type="OrthoDB" id="311279at2759"/>
<dbReference type="PhylomeDB" id="Q9CA79"/>
<dbReference type="BioCyc" id="ARA:AT1G74340-MONOMER"/>
<dbReference type="BioCyc" id="MetaCyc:AT1G74340-MONOMER"/>
<dbReference type="UniPathway" id="UPA00378"/>
<dbReference type="PRO" id="PR:Q9CA79"/>
<dbReference type="Proteomes" id="UP000006548">
    <property type="component" value="Chromosome 1"/>
</dbReference>
<dbReference type="ExpressionAtlas" id="Q9CA79">
    <property type="expression patterns" value="baseline and differential"/>
</dbReference>
<dbReference type="GO" id="GO:0033185">
    <property type="term" value="C:dolichol-phosphate-mannose synthase complex"/>
    <property type="evidence" value="ECO:0000353"/>
    <property type="project" value="TAIR"/>
</dbReference>
<dbReference type="GO" id="GO:0005783">
    <property type="term" value="C:endoplasmic reticulum"/>
    <property type="evidence" value="ECO:0000314"/>
    <property type="project" value="TAIR"/>
</dbReference>
<dbReference type="GO" id="GO:0005789">
    <property type="term" value="C:endoplasmic reticulum membrane"/>
    <property type="evidence" value="ECO:0007669"/>
    <property type="project" value="UniProtKB-SubCell"/>
</dbReference>
<dbReference type="GO" id="GO:0030234">
    <property type="term" value="F:enzyme regulator activity"/>
    <property type="evidence" value="ECO:0007669"/>
    <property type="project" value="InterPro"/>
</dbReference>
<dbReference type="GO" id="GO:0180047">
    <property type="term" value="P:dolichol phosphate mannose biosynthetic process"/>
    <property type="evidence" value="ECO:0007669"/>
    <property type="project" value="InterPro"/>
</dbReference>
<dbReference type="GO" id="GO:0006486">
    <property type="term" value="P:protein glycosylation"/>
    <property type="evidence" value="ECO:0007669"/>
    <property type="project" value="UniProtKB-UniPathway"/>
</dbReference>
<dbReference type="InterPro" id="IPR009914">
    <property type="entry name" value="DPM2"/>
</dbReference>
<dbReference type="PANTHER" id="PTHR15039">
    <property type="entry name" value="DOLICHOL PHOSPHATE-MANNOSE BIOSYNTHESIS REGULATORY PROTEIN"/>
    <property type="match status" value="1"/>
</dbReference>
<dbReference type="PANTHER" id="PTHR15039:SF11">
    <property type="entry name" value="DOLICHOL PHOSPHATE-MANNOSE BIOSYNTHESIS REGULATORY PROTEIN"/>
    <property type="match status" value="1"/>
</dbReference>
<dbReference type="Pfam" id="PF07297">
    <property type="entry name" value="DPM2"/>
    <property type="match status" value="1"/>
</dbReference>
<gene>
    <name evidence="3" type="primary">DPMS2</name>
    <name evidence="5" type="ordered locus">At1g74340</name>
    <name evidence="6" type="ORF">F1M20.2</name>
</gene>
<feature type="chain" id="PRO_0000440170" description="Dolichol-phosphate mannose synthase subunit 2">
    <location>
        <begin position="1"/>
        <end position="80"/>
    </location>
</feature>
<feature type="transmembrane region" description="Helical" evidence="1">
    <location>
        <begin position="10"/>
        <end position="30"/>
    </location>
</feature>
<feature type="transmembrane region" description="Helical" evidence="1">
    <location>
        <begin position="50"/>
        <end position="70"/>
    </location>
</feature>
<name>DPM2_ARATH</name>
<organism>
    <name type="scientific">Arabidopsis thaliana</name>
    <name type="common">Mouse-ear cress</name>
    <dbReference type="NCBI Taxonomy" id="3702"/>
    <lineage>
        <taxon>Eukaryota</taxon>
        <taxon>Viridiplantae</taxon>
        <taxon>Streptophyta</taxon>
        <taxon>Embryophyta</taxon>
        <taxon>Tracheophyta</taxon>
        <taxon>Spermatophyta</taxon>
        <taxon>Magnoliopsida</taxon>
        <taxon>eudicotyledons</taxon>
        <taxon>Gunneridae</taxon>
        <taxon>Pentapetalae</taxon>
        <taxon>rosids</taxon>
        <taxon>malvids</taxon>
        <taxon>Brassicales</taxon>
        <taxon>Brassicaceae</taxon>
        <taxon>Camelineae</taxon>
        <taxon>Arabidopsis</taxon>
    </lineage>
</organism>
<evidence type="ECO:0000255" key="1"/>
<evidence type="ECO:0000269" key="2">
    <source>
    </source>
</evidence>
<evidence type="ECO:0000303" key="3">
    <source>
    </source>
</evidence>
<evidence type="ECO:0000305" key="4"/>
<evidence type="ECO:0000312" key="5">
    <source>
        <dbReference type="Araport" id="AT1G74340"/>
    </source>
</evidence>
<evidence type="ECO:0000312" key="6">
    <source>
        <dbReference type="EMBL" id="AAG52357.1"/>
    </source>
</evidence>
<proteinExistence type="evidence at protein level"/>
<reference key="1">
    <citation type="journal article" date="2000" name="Nature">
        <title>Sequence and analysis of chromosome 1 of the plant Arabidopsis thaliana.</title>
        <authorList>
            <person name="Theologis A."/>
            <person name="Ecker J.R."/>
            <person name="Palm C.J."/>
            <person name="Federspiel N.A."/>
            <person name="Kaul S."/>
            <person name="White O."/>
            <person name="Alonso J."/>
            <person name="Altafi H."/>
            <person name="Araujo R."/>
            <person name="Bowman C.L."/>
            <person name="Brooks S.Y."/>
            <person name="Buehler E."/>
            <person name="Chan A."/>
            <person name="Chao Q."/>
            <person name="Chen H."/>
            <person name="Cheuk R.F."/>
            <person name="Chin C.W."/>
            <person name="Chung M.K."/>
            <person name="Conn L."/>
            <person name="Conway A.B."/>
            <person name="Conway A.R."/>
            <person name="Creasy T.H."/>
            <person name="Dewar K."/>
            <person name="Dunn P."/>
            <person name="Etgu P."/>
            <person name="Feldblyum T.V."/>
            <person name="Feng J.-D."/>
            <person name="Fong B."/>
            <person name="Fujii C.Y."/>
            <person name="Gill J.E."/>
            <person name="Goldsmith A.D."/>
            <person name="Haas B."/>
            <person name="Hansen N.F."/>
            <person name="Hughes B."/>
            <person name="Huizar L."/>
            <person name="Hunter J.L."/>
            <person name="Jenkins J."/>
            <person name="Johnson-Hopson C."/>
            <person name="Khan S."/>
            <person name="Khaykin E."/>
            <person name="Kim C.J."/>
            <person name="Koo H.L."/>
            <person name="Kremenetskaia I."/>
            <person name="Kurtz D.B."/>
            <person name="Kwan A."/>
            <person name="Lam B."/>
            <person name="Langin-Hooper S."/>
            <person name="Lee A."/>
            <person name="Lee J.M."/>
            <person name="Lenz C.A."/>
            <person name="Li J.H."/>
            <person name="Li Y.-P."/>
            <person name="Lin X."/>
            <person name="Liu S.X."/>
            <person name="Liu Z.A."/>
            <person name="Luros J.S."/>
            <person name="Maiti R."/>
            <person name="Marziali A."/>
            <person name="Militscher J."/>
            <person name="Miranda M."/>
            <person name="Nguyen M."/>
            <person name="Nierman W.C."/>
            <person name="Osborne B.I."/>
            <person name="Pai G."/>
            <person name="Peterson J."/>
            <person name="Pham P.K."/>
            <person name="Rizzo M."/>
            <person name="Rooney T."/>
            <person name="Rowley D."/>
            <person name="Sakano H."/>
            <person name="Salzberg S.L."/>
            <person name="Schwartz J.R."/>
            <person name="Shinn P."/>
            <person name="Southwick A.M."/>
            <person name="Sun H."/>
            <person name="Tallon L.J."/>
            <person name="Tambunga G."/>
            <person name="Toriumi M.J."/>
            <person name="Town C.D."/>
            <person name="Utterback T."/>
            <person name="Van Aken S."/>
            <person name="Vaysberg M."/>
            <person name="Vysotskaia V.S."/>
            <person name="Walker M."/>
            <person name="Wu D."/>
            <person name="Yu G."/>
            <person name="Fraser C.M."/>
            <person name="Venter J.C."/>
            <person name="Davis R.W."/>
        </authorList>
    </citation>
    <scope>NUCLEOTIDE SEQUENCE [LARGE SCALE GENOMIC DNA]</scope>
    <source>
        <strain>cv. Columbia</strain>
    </source>
</reference>
<reference key="2">
    <citation type="journal article" date="2017" name="Plant J.">
        <title>Araport11: a complete reannotation of the Arabidopsis thaliana reference genome.</title>
        <authorList>
            <person name="Cheng C.Y."/>
            <person name="Krishnakumar V."/>
            <person name="Chan A.P."/>
            <person name="Thibaud-Nissen F."/>
            <person name="Schobel S."/>
            <person name="Town C.D."/>
        </authorList>
    </citation>
    <scope>GENOME REANNOTATION</scope>
    <source>
        <strain>cv. Columbia</strain>
    </source>
</reference>
<reference key="3">
    <citation type="journal article" date="2003" name="Science">
        <title>Empirical analysis of transcriptional activity in the Arabidopsis genome.</title>
        <authorList>
            <person name="Yamada K."/>
            <person name="Lim J."/>
            <person name="Dale J.M."/>
            <person name="Chen H."/>
            <person name="Shinn P."/>
            <person name="Palm C.J."/>
            <person name="Southwick A.M."/>
            <person name="Wu H.C."/>
            <person name="Kim C.J."/>
            <person name="Nguyen M."/>
            <person name="Pham P.K."/>
            <person name="Cheuk R.F."/>
            <person name="Karlin-Newmann G."/>
            <person name="Liu S.X."/>
            <person name="Lam B."/>
            <person name="Sakano H."/>
            <person name="Wu T."/>
            <person name="Yu G."/>
            <person name="Miranda M."/>
            <person name="Quach H.L."/>
            <person name="Tripp M."/>
            <person name="Chang C.H."/>
            <person name="Lee J.M."/>
            <person name="Toriumi M.J."/>
            <person name="Chan M.M."/>
            <person name="Tang C.C."/>
            <person name="Onodera C.S."/>
            <person name="Deng J.M."/>
            <person name="Akiyama K."/>
            <person name="Ansari Y."/>
            <person name="Arakawa T."/>
            <person name="Banh J."/>
            <person name="Banno F."/>
            <person name="Bowser L."/>
            <person name="Brooks S.Y."/>
            <person name="Carninci P."/>
            <person name="Chao Q."/>
            <person name="Choy N."/>
            <person name="Enju A."/>
            <person name="Goldsmith A.D."/>
            <person name="Gurjal M."/>
            <person name="Hansen N.F."/>
            <person name="Hayashizaki Y."/>
            <person name="Johnson-Hopson C."/>
            <person name="Hsuan V.W."/>
            <person name="Iida K."/>
            <person name="Karnes M."/>
            <person name="Khan S."/>
            <person name="Koesema E."/>
            <person name="Ishida J."/>
            <person name="Jiang P.X."/>
            <person name="Jones T."/>
            <person name="Kawai J."/>
            <person name="Kamiya A."/>
            <person name="Meyers C."/>
            <person name="Nakajima M."/>
            <person name="Narusaka M."/>
            <person name="Seki M."/>
            <person name="Sakurai T."/>
            <person name="Satou M."/>
            <person name="Tamse R."/>
            <person name="Vaysberg M."/>
            <person name="Wallender E.K."/>
            <person name="Wong C."/>
            <person name="Yamamura Y."/>
            <person name="Yuan S."/>
            <person name="Shinozaki K."/>
            <person name="Davis R.W."/>
            <person name="Theologis A."/>
            <person name="Ecker J.R."/>
        </authorList>
    </citation>
    <scope>NUCLEOTIDE SEQUENCE [LARGE SCALE MRNA]</scope>
    <source>
        <strain>cv. Columbia</strain>
    </source>
</reference>
<reference key="4">
    <citation type="submission" date="2006-07" db="EMBL/GenBank/DDBJ databases">
        <title>Large-scale analysis of RIKEN Arabidopsis full-length (RAFL) cDNAs.</title>
        <authorList>
            <person name="Totoki Y."/>
            <person name="Seki M."/>
            <person name="Ishida J."/>
            <person name="Nakajima M."/>
            <person name="Enju A."/>
            <person name="Kamiya A."/>
            <person name="Narusaka M."/>
            <person name="Shin-i T."/>
            <person name="Nakagawa M."/>
            <person name="Sakamoto N."/>
            <person name="Oishi K."/>
            <person name="Kohara Y."/>
            <person name="Kobayashi M."/>
            <person name="Toyoda A."/>
            <person name="Sakaki Y."/>
            <person name="Sakurai T."/>
            <person name="Iida K."/>
            <person name="Akiyama K."/>
            <person name="Satou M."/>
            <person name="Toyoda T."/>
            <person name="Konagaya A."/>
            <person name="Carninci P."/>
            <person name="Kawai J."/>
            <person name="Hayashizaki Y."/>
            <person name="Shinozaki K."/>
        </authorList>
    </citation>
    <scope>NUCLEOTIDE SEQUENCE [LARGE SCALE MRNA]</scope>
    <source>
        <strain>cv. Columbia</strain>
    </source>
</reference>
<reference key="5">
    <citation type="journal article" date="2011" name="Plant Cell">
        <title>DOLICHOL PHOSPHATE MANNOSE SYNTHASE1 mediates the biogenesis of isoprenyl-linked glycans and influences development, stress response, and ammonium hypersensitivity in Arabidopsis.</title>
        <authorList>
            <person name="Jadid N."/>
            <person name="Mialoundama A.S."/>
            <person name="Heintz D."/>
            <person name="Ayoub D."/>
            <person name="Erhardt M."/>
            <person name="Mutterer J."/>
            <person name="Meyer D."/>
            <person name="Alioua A."/>
            <person name="Van Dorsselaer A."/>
            <person name="Rahier A."/>
            <person name="Camara B."/>
            <person name="Bouvier F."/>
        </authorList>
    </citation>
    <scope>FUNCTION</scope>
    <scope>IDENTIFICATION BY MASS SPECTROMETRY</scope>
    <scope>CATALYTIC ACTIVITY</scope>
    <scope>SUBCELLULAR LOCATION</scope>
    <scope>DISRUPTION PHENOTYPE</scope>
</reference>
<protein>
    <recommendedName>
        <fullName evidence="4">Dolichol-phosphate mannose synthase subunit 2</fullName>
        <shortName evidence="4">DPM synthase subunit 2</shortName>
    </recommendedName>
    <alternativeName>
        <fullName evidence="3">Dol-P-Man synthase1</fullName>
    </alternativeName>
    <alternativeName>
        <fullName evidence="4">Dolichol phosphate-mannose biosynthesis regulatory protein</fullName>
    </alternativeName>
</protein>
<keyword id="KW-0256">Endoplasmic reticulum</keyword>
<keyword id="KW-0472">Membrane</keyword>
<keyword id="KW-1185">Reference proteome</keyword>
<keyword id="KW-0812">Transmembrane</keyword>
<keyword id="KW-1133">Transmembrane helix</keyword>
<accession>Q9CA79</accession>